<gene>
    <name evidence="1" type="primary">topA</name>
    <name type="ordered locus">SAS1184</name>
</gene>
<sequence length="689" mass="79071">MADNLVIVESPAKAKTIEKYLGKKYKVIASMGHVRDLPRSQMGVDTEDNYEPKYITIRGKGPVVKELKKHAKKAKNVFLASDPDREGEAIAWHLSKILELEDSKENRVVFNEITKDAVKESFKNPREIEMNLVDAQQARRILDRLVGYNISPVLWKKVKKGLSAGRVQSVALRLVIDRENEIRNFKPEEYWTIEGEFRYKKSKFNAKFLHYKNKPFKLKTKKDVEKITAALDGDQFEITNVTKKEKTRNPANPFTTSTLQQEAARKLNFKARKTMMVAQQLYEGIDLKKQGTIGLITYMRTDSTRISDTAKAEAKQYITDKYGESYTSKRKASGKQGDQDAHEAIRPSSTMRTPDDMKSFLTKDQYRLYKLIWERFVASQMAPAILDTVSLDITQGDIKFRANGQTIKFKGFMTLYVETKDDSDSEKENKLPKLEQGDKVTATQIEPAQHYTQPPPRYTEARLVKTLEELKIGRPSTYAPTIDTIQKRNYVKLESKRFVPTELGEIVHEQVKEYFPEIIDVEFTVNMETLLDKIAEGDITWRKVIDGFFSSFKQDVERAEEEMEKIEIKDEPAGEDCEVCGSPMVIKMGRYGKFMACSNFPDCRNTKAIVKSIGVKCPKCNDGDVVERKSKKNRVFYGCSKYPECDFISWDKPIGRDCPKCNQYLVENKKGKTTQVICSNCDYKEAAQK</sequence>
<accession>Q6G9W3</accession>
<organism>
    <name type="scientific">Staphylococcus aureus (strain MSSA476)</name>
    <dbReference type="NCBI Taxonomy" id="282459"/>
    <lineage>
        <taxon>Bacteria</taxon>
        <taxon>Bacillati</taxon>
        <taxon>Bacillota</taxon>
        <taxon>Bacilli</taxon>
        <taxon>Bacillales</taxon>
        <taxon>Staphylococcaceae</taxon>
        <taxon>Staphylococcus</taxon>
    </lineage>
</organism>
<name>TOP1_STAAS</name>
<keyword id="KW-0238">DNA-binding</keyword>
<keyword id="KW-0413">Isomerase</keyword>
<keyword id="KW-0460">Magnesium</keyword>
<keyword id="KW-0479">Metal-binding</keyword>
<keyword id="KW-0677">Repeat</keyword>
<keyword id="KW-0799">Topoisomerase</keyword>
<keyword id="KW-0862">Zinc</keyword>
<keyword id="KW-0863">Zinc-finger</keyword>
<evidence type="ECO:0000255" key="1">
    <source>
        <dbReference type="HAMAP-Rule" id="MF_00952"/>
    </source>
</evidence>
<evidence type="ECO:0000255" key="2">
    <source>
        <dbReference type="PROSITE-ProRule" id="PRU01383"/>
    </source>
</evidence>
<evidence type="ECO:0000256" key="3">
    <source>
        <dbReference type="SAM" id="MobiDB-lite"/>
    </source>
</evidence>
<dbReference type="EC" id="5.6.2.1" evidence="1"/>
<dbReference type="EMBL" id="BX571857">
    <property type="protein sequence ID" value="CAG42961.1"/>
    <property type="molecule type" value="Genomic_DNA"/>
</dbReference>
<dbReference type="SMR" id="Q6G9W3"/>
<dbReference type="KEGG" id="sas:SAS1184"/>
<dbReference type="HOGENOM" id="CLU_002929_4_3_9"/>
<dbReference type="GO" id="GO:0005694">
    <property type="term" value="C:chromosome"/>
    <property type="evidence" value="ECO:0007669"/>
    <property type="project" value="InterPro"/>
</dbReference>
<dbReference type="GO" id="GO:0003677">
    <property type="term" value="F:DNA binding"/>
    <property type="evidence" value="ECO:0007669"/>
    <property type="project" value="UniProtKB-KW"/>
</dbReference>
<dbReference type="GO" id="GO:0003917">
    <property type="term" value="F:DNA topoisomerase type I (single strand cut, ATP-independent) activity"/>
    <property type="evidence" value="ECO:0007669"/>
    <property type="project" value="UniProtKB-UniRule"/>
</dbReference>
<dbReference type="GO" id="GO:0008270">
    <property type="term" value="F:zinc ion binding"/>
    <property type="evidence" value="ECO:0007669"/>
    <property type="project" value="UniProtKB-KW"/>
</dbReference>
<dbReference type="GO" id="GO:0006265">
    <property type="term" value="P:DNA topological change"/>
    <property type="evidence" value="ECO:0007669"/>
    <property type="project" value="UniProtKB-UniRule"/>
</dbReference>
<dbReference type="CDD" id="cd00186">
    <property type="entry name" value="TOP1Ac"/>
    <property type="match status" value="1"/>
</dbReference>
<dbReference type="CDD" id="cd03363">
    <property type="entry name" value="TOPRIM_TopoIA_TopoI"/>
    <property type="match status" value="1"/>
</dbReference>
<dbReference type="Gene3D" id="3.40.50.140">
    <property type="match status" value="1"/>
</dbReference>
<dbReference type="Gene3D" id="3.30.65.10">
    <property type="entry name" value="Bacterial Topoisomerase I, domain 1"/>
    <property type="match status" value="2"/>
</dbReference>
<dbReference type="Gene3D" id="1.10.460.10">
    <property type="entry name" value="Topoisomerase I, domain 2"/>
    <property type="match status" value="1"/>
</dbReference>
<dbReference type="Gene3D" id="2.70.20.10">
    <property type="entry name" value="Topoisomerase I, domain 3"/>
    <property type="match status" value="1"/>
</dbReference>
<dbReference type="Gene3D" id="1.10.290.10">
    <property type="entry name" value="Topoisomerase I, domain 4"/>
    <property type="match status" value="1"/>
</dbReference>
<dbReference type="HAMAP" id="MF_00952">
    <property type="entry name" value="Topoisom_1_prok"/>
    <property type="match status" value="1"/>
</dbReference>
<dbReference type="InterPro" id="IPR000380">
    <property type="entry name" value="Topo_IA"/>
</dbReference>
<dbReference type="InterPro" id="IPR003601">
    <property type="entry name" value="Topo_IA_2"/>
</dbReference>
<dbReference type="InterPro" id="IPR023406">
    <property type="entry name" value="Topo_IA_AS"/>
</dbReference>
<dbReference type="InterPro" id="IPR013497">
    <property type="entry name" value="Topo_IA_cen"/>
</dbReference>
<dbReference type="InterPro" id="IPR013824">
    <property type="entry name" value="Topo_IA_cen_sub1"/>
</dbReference>
<dbReference type="InterPro" id="IPR013825">
    <property type="entry name" value="Topo_IA_cen_sub2"/>
</dbReference>
<dbReference type="InterPro" id="IPR013826">
    <property type="entry name" value="Topo_IA_cen_sub3"/>
</dbReference>
<dbReference type="InterPro" id="IPR023405">
    <property type="entry name" value="Topo_IA_core_domain"/>
</dbReference>
<dbReference type="InterPro" id="IPR003602">
    <property type="entry name" value="Topo_IA_DNA-bd_dom"/>
</dbReference>
<dbReference type="InterPro" id="IPR013498">
    <property type="entry name" value="Topo_IA_Znf"/>
</dbReference>
<dbReference type="InterPro" id="IPR005733">
    <property type="entry name" value="TopoI_bac-type"/>
</dbReference>
<dbReference type="InterPro" id="IPR028612">
    <property type="entry name" value="Topoisom_1_IA"/>
</dbReference>
<dbReference type="InterPro" id="IPR006171">
    <property type="entry name" value="TOPRIM_dom"/>
</dbReference>
<dbReference type="InterPro" id="IPR034149">
    <property type="entry name" value="TOPRIM_TopoI"/>
</dbReference>
<dbReference type="NCBIfam" id="TIGR01051">
    <property type="entry name" value="topA_bact"/>
    <property type="match status" value="1"/>
</dbReference>
<dbReference type="PANTHER" id="PTHR42785:SF1">
    <property type="entry name" value="DNA TOPOISOMERASE"/>
    <property type="match status" value="1"/>
</dbReference>
<dbReference type="PANTHER" id="PTHR42785">
    <property type="entry name" value="DNA TOPOISOMERASE, TYPE IA, CORE"/>
    <property type="match status" value="1"/>
</dbReference>
<dbReference type="Pfam" id="PF01131">
    <property type="entry name" value="Topoisom_bac"/>
    <property type="match status" value="1"/>
</dbReference>
<dbReference type="Pfam" id="PF01751">
    <property type="entry name" value="Toprim"/>
    <property type="match status" value="1"/>
</dbReference>
<dbReference type="Pfam" id="PF01396">
    <property type="entry name" value="Zn_ribbon_Top1"/>
    <property type="match status" value="3"/>
</dbReference>
<dbReference type="PRINTS" id="PR00417">
    <property type="entry name" value="PRTPISMRASEI"/>
</dbReference>
<dbReference type="SMART" id="SM00437">
    <property type="entry name" value="TOP1Ac"/>
    <property type="match status" value="1"/>
</dbReference>
<dbReference type="SMART" id="SM00436">
    <property type="entry name" value="TOP1Bc"/>
    <property type="match status" value="1"/>
</dbReference>
<dbReference type="SMART" id="SM00493">
    <property type="entry name" value="TOPRIM"/>
    <property type="match status" value="1"/>
</dbReference>
<dbReference type="SUPFAM" id="SSF56712">
    <property type="entry name" value="Prokaryotic type I DNA topoisomerase"/>
    <property type="match status" value="1"/>
</dbReference>
<dbReference type="PROSITE" id="PS00396">
    <property type="entry name" value="TOPO_IA_1"/>
    <property type="match status" value="1"/>
</dbReference>
<dbReference type="PROSITE" id="PS52039">
    <property type="entry name" value="TOPO_IA_2"/>
    <property type="match status" value="1"/>
</dbReference>
<dbReference type="PROSITE" id="PS50880">
    <property type="entry name" value="TOPRIM"/>
    <property type="match status" value="1"/>
</dbReference>
<comment type="function">
    <text evidence="1">Releases the supercoiling and torsional tension of DNA, which is introduced during the DNA replication and transcription, by transiently cleaving and rejoining one strand of the DNA duplex. Introduces a single-strand break via transesterification at a target site in duplex DNA. The scissile phosphodiester is attacked by the catalytic tyrosine of the enzyme, resulting in the formation of a DNA-(5'-phosphotyrosyl)-enzyme intermediate and the expulsion of a 3'-OH DNA strand. The free DNA strand then undergoes passage around the unbroken strand, thus removing DNA supercoils. Finally, in the religation step, the DNA 3'-OH attacks the covalent intermediate to expel the active-site tyrosine and restore the DNA phosphodiester backbone.</text>
</comment>
<comment type="catalytic activity">
    <reaction evidence="1">
        <text>ATP-independent breakage of single-stranded DNA, followed by passage and rejoining.</text>
        <dbReference type="EC" id="5.6.2.1"/>
    </reaction>
</comment>
<comment type="cofactor">
    <cofactor evidence="1">
        <name>Mg(2+)</name>
        <dbReference type="ChEBI" id="CHEBI:18420"/>
    </cofactor>
</comment>
<comment type="subunit">
    <text evidence="1">Monomer.</text>
</comment>
<comment type="similarity">
    <text evidence="1">Belongs to the type IA topoisomerase family.</text>
</comment>
<proteinExistence type="inferred from homology"/>
<protein>
    <recommendedName>
        <fullName evidence="1">DNA topoisomerase 1</fullName>
        <ecNumber evidence="1">5.6.2.1</ecNumber>
    </recommendedName>
    <alternativeName>
        <fullName evidence="1">DNA topoisomerase I</fullName>
    </alternativeName>
    <alternativeName>
        <fullName>Omega-protein</fullName>
    </alternativeName>
    <alternativeName>
        <fullName>Relaxing enzyme</fullName>
    </alternativeName>
    <alternativeName>
        <fullName>Swivelase</fullName>
    </alternativeName>
    <alternativeName>
        <fullName>Untwisting enzyme</fullName>
    </alternativeName>
</protein>
<feature type="chain" id="PRO_0000285938" description="DNA topoisomerase 1">
    <location>
        <begin position="1"/>
        <end position="689"/>
    </location>
</feature>
<feature type="domain" description="Toprim" evidence="1">
    <location>
        <begin position="3"/>
        <end position="113"/>
    </location>
</feature>
<feature type="domain" description="Topo IA-type catalytic" evidence="2">
    <location>
        <begin position="129"/>
        <end position="557"/>
    </location>
</feature>
<feature type="zinc finger region" description="C4-type 1">
    <location>
        <begin position="577"/>
        <end position="603"/>
    </location>
</feature>
<feature type="zinc finger region" description="C4-type 2">
    <location>
        <begin position="617"/>
        <end position="645"/>
    </location>
</feature>
<feature type="zinc finger region" description="C4-type 3">
    <location>
        <begin position="658"/>
        <end position="681"/>
    </location>
</feature>
<feature type="region of interest" description="Interaction with DNA" evidence="1">
    <location>
        <begin position="163"/>
        <end position="168"/>
    </location>
</feature>
<feature type="region of interest" description="Disordered" evidence="3">
    <location>
        <begin position="328"/>
        <end position="357"/>
    </location>
</feature>
<feature type="active site" description="O-(5'-phospho-DNA)-tyrosine intermediate" evidence="2">
    <location>
        <position position="298"/>
    </location>
</feature>
<feature type="binding site" evidence="1">
    <location>
        <position position="9"/>
    </location>
    <ligand>
        <name>Mg(2+)</name>
        <dbReference type="ChEBI" id="CHEBI:18420"/>
        <note>catalytic</note>
    </ligand>
</feature>
<feature type="binding site" evidence="1">
    <location>
        <position position="82"/>
    </location>
    <ligand>
        <name>Mg(2+)</name>
        <dbReference type="ChEBI" id="CHEBI:18420"/>
        <note>catalytic</note>
    </ligand>
</feature>
<feature type="site" description="Interaction with DNA" evidence="1">
    <location>
        <position position="33"/>
    </location>
</feature>
<feature type="site" description="Interaction with DNA" evidence="1">
    <location>
        <position position="139"/>
    </location>
</feature>
<feature type="site" description="Interaction with DNA" evidence="1">
    <location>
        <position position="140"/>
    </location>
</feature>
<feature type="site" description="Interaction with DNA" evidence="1">
    <location>
        <position position="143"/>
    </location>
</feature>
<feature type="site" description="Interaction with DNA" evidence="1">
    <location>
        <position position="148"/>
    </location>
</feature>
<feature type="site" description="Interaction with DNA" evidence="1">
    <location>
        <position position="155"/>
    </location>
</feature>
<feature type="site" description="Interaction with DNA" evidence="1">
    <location>
        <position position="300"/>
    </location>
</feature>
<feature type="site" description="Interaction with DNA" evidence="1">
    <location>
        <position position="488"/>
    </location>
</feature>
<reference key="1">
    <citation type="journal article" date="2004" name="Proc. Natl. Acad. Sci. U.S.A.">
        <title>Complete genomes of two clinical Staphylococcus aureus strains: evidence for the rapid evolution of virulence and drug resistance.</title>
        <authorList>
            <person name="Holden M.T.G."/>
            <person name="Feil E.J."/>
            <person name="Lindsay J.A."/>
            <person name="Peacock S.J."/>
            <person name="Day N.P.J."/>
            <person name="Enright M.C."/>
            <person name="Foster T.J."/>
            <person name="Moore C.E."/>
            <person name="Hurst L."/>
            <person name="Atkin R."/>
            <person name="Barron A."/>
            <person name="Bason N."/>
            <person name="Bentley S.D."/>
            <person name="Chillingworth C."/>
            <person name="Chillingworth T."/>
            <person name="Churcher C."/>
            <person name="Clark L."/>
            <person name="Corton C."/>
            <person name="Cronin A."/>
            <person name="Doggett J."/>
            <person name="Dowd L."/>
            <person name="Feltwell T."/>
            <person name="Hance Z."/>
            <person name="Harris B."/>
            <person name="Hauser H."/>
            <person name="Holroyd S."/>
            <person name="Jagels K."/>
            <person name="James K.D."/>
            <person name="Lennard N."/>
            <person name="Line A."/>
            <person name="Mayes R."/>
            <person name="Moule S."/>
            <person name="Mungall K."/>
            <person name="Ormond D."/>
            <person name="Quail M.A."/>
            <person name="Rabbinowitsch E."/>
            <person name="Rutherford K.M."/>
            <person name="Sanders M."/>
            <person name="Sharp S."/>
            <person name="Simmonds M."/>
            <person name="Stevens K."/>
            <person name="Whitehead S."/>
            <person name="Barrell B.G."/>
            <person name="Spratt B.G."/>
            <person name="Parkhill J."/>
        </authorList>
    </citation>
    <scope>NUCLEOTIDE SEQUENCE [LARGE SCALE GENOMIC DNA]</scope>
    <source>
        <strain>MSSA476</strain>
    </source>
</reference>